<organism>
    <name type="scientific">Escherichia coli O157:H7</name>
    <dbReference type="NCBI Taxonomy" id="83334"/>
    <lineage>
        <taxon>Bacteria</taxon>
        <taxon>Pseudomonadati</taxon>
        <taxon>Pseudomonadota</taxon>
        <taxon>Gammaproteobacteria</taxon>
        <taxon>Enterobacterales</taxon>
        <taxon>Enterobacteriaceae</taxon>
        <taxon>Escherichia</taxon>
    </lineage>
</organism>
<gene>
    <name evidence="4" type="primary">ecdB</name>
    <name type="synonym">pad1</name>
    <name type="ordered locus">Z4047</name>
    <name type="ordered locus">ECs3593</name>
</gene>
<sequence>MKLIVGMTGATGAPLGVALLQALREMPNVETHLVMSKWAKTTIELETPYSARDVAALADFSHNPADQAATISSGSFRTDGMIVIPCSMKTLAGIRAGYADGLVGRAADVVLKEGRKLVLVPREMPLSTIHLENMLALSRMGVAMVPPMPAFYNHPETVDDIVHHVVARVLDQFGLEHPYARRWQGLPQARNFSQENE</sequence>
<keyword id="KW-0002">3D-structure</keyword>
<keyword id="KW-0058">Aromatic hydrocarbons catabolism</keyword>
<keyword id="KW-0216">Detoxification</keyword>
<keyword id="KW-0285">Flavoprotein</keyword>
<keyword id="KW-0288">FMN</keyword>
<keyword id="KW-0637">Prenyltransferase</keyword>
<keyword id="KW-1185">Reference proteome</keyword>
<keyword id="KW-0808">Transferase</keyword>
<reference key="1">
    <citation type="submission" date="1998-05" db="EMBL/GenBank/DDBJ databases">
        <title>Comparison of the mutS-rpoS region from Escherichia coli O157:H7, verocytotoxin-containing and non-verocytotoxin-containing E.coli.</title>
        <authorList>
            <person name="Carter P.E."/>
            <person name="Thomson-Carter F.M."/>
        </authorList>
    </citation>
    <scope>NUCLEOTIDE SEQUENCE [GENOMIC DNA]</scope>
    <source>
        <strain>O157:H7 / EHEC</strain>
    </source>
</reference>
<reference key="2">
    <citation type="journal article" date="2001" name="Nature">
        <title>Genome sequence of enterohaemorrhagic Escherichia coli O157:H7.</title>
        <authorList>
            <person name="Perna N.T."/>
            <person name="Plunkett G. III"/>
            <person name="Burland V."/>
            <person name="Mau B."/>
            <person name="Glasner J.D."/>
            <person name="Rose D.J."/>
            <person name="Mayhew G.F."/>
            <person name="Evans P.S."/>
            <person name="Gregor J."/>
            <person name="Kirkpatrick H.A."/>
            <person name="Posfai G."/>
            <person name="Hackett J."/>
            <person name="Klink S."/>
            <person name="Boutin A."/>
            <person name="Shao Y."/>
            <person name="Miller L."/>
            <person name="Grotbeck E.J."/>
            <person name="Davis N.W."/>
            <person name="Lim A."/>
            <person name="Dimalanta E.T."/>
            <person name="Potamousis K."/>
            <person name="Apodaca J."/>
            <person name="Anantharaman T.S."/>
            <person name="Lin J."/>
            <person name="Yen G."/>
            <person name="Schwartz D.C."/>
            <person name="Welch R.A."/>
            <person name="Blattner F.R."/>
        </authorList>
    </citation>
    <scope>NUCLEOTIDE SEQUENCE [LARGE SCALE GENOMIC DNA]</scope>
    <source>
        <strain>O157:H7 / EDL933 / ATCC 700927 / EHEC</strain>
    </source>
</reference>
<reference key="3">
    <citation type="journal article" date="2001" name="DNA Res.">
        <title>Complete genome sequence of enterohemorrhagic Escherichia coli O157:H7 and genomic comparison with a laboratory strain K-12.</title>
        <authorList>
            <person name="Hayashi T."/>
            <person name="Makino K."/>
            <person name="Ohnishi M."/>
            <person name="Kurokawa K."/>
            <person name="Ishii K."/>
            <person name="Yokoyama K."/>
            <person name="Han C.-G."/>
            <person name="Ohtsubo E."/>
            <person name="Nakayama K."/>
            <person name="Murata T."/>
            <person name="Tanaka M."/>
            <person name="Tobe T."/>
            <person name="Iida T."/>
            <person name="Takami H."/>
            <person name="Honda T."/>
            <person name="Sasakawa C."/>
            <person name="Ogasawara N."/>
            <person name="Yasunaga T."/>
            <person name="Kuhara S."/>
            <person name="Shiba T."/>
            <person name="Hattori M."/>
            <person name="Shinagawa H."/>
        </authorList>
    </citation>
    <scope>NUCLEOTIDE SEQUENCE [LARGE SCALE GENOMIC DNA]</scope>
    <source>
        <strain>O157:H7 / Sakai / RIMD 0509952 / EHEC</strain>
    </source>
</reference>
<reference key="4">
    <citation type="journal article" date="2005" name="Genomics">
        <title>Distribution of genes encoding the microbial non-oxidative reversible hydroxyarylic acid decarboxylases/phenol carboxylases.</title>
        <authorList>
            <person name="Lupa B."/>
            <person name="Lyon D."/>
            <person name="Gibbs M.D."/>
            <person name="Reeves R.A."/>
            <person name="Wiegel J."/>
        </authorList>
    </citation>
    <scope>FUNCTION</scope>
    <source>
        <strain>O157:H7 / EDL933 / ATCC 700927 / EHEC</strain>
    </source>
</reference>
<reference key="5">
    <citation type="journal article" date="2004" name="Protein Sci.">
        <title>Crystal structure of a dodecameric FMN-dependent UbiX-like decarboxylase (Pad1) from Escherichia coli O157: H7.</title>
        <authorList>
            <person name="Rangarajan E.S."/>
            <person name="Li Y."/>
            <person name="Iannuzzi P."/>
            <person name="Tocilj A."/>
            <person name="Hung L.-W."/>
            <person name="Matte A."/>
            <person name="Cygler M."/>
        </authorList>
    </citation>
    <scope>X-RAY CRYSTALLOGRAPHY (2.0 ANGSTROMS) IN COMPLEX WITH FMN</scope>
    <scope>SUBUNIT</scope>
    <scope>IDENTIFICATION BY MASS SPECTROMETRY</scope>
</reference>
<proteinExistence type="evidence at protein level"/>
<comment type="function">
    <text evidence="1 3">Involved in the non-oxidative decarboxylation and detoxification of phenolic derivatives under both aerobic and anaerobic conditions (PubMed:15979273). Flavin prenyltransferase that catalyzes the synthesis of the prenylated FMN cofactor (prenyl-FMN) for phenolic acid decarboxylase (By similarity).</text>
</comment>
<comment type="catalytic activity">
    <reaction evidence="1">
        <text>dimethylallyl phosphate + FMNH2 = prenylated FMNH2 + phosphate</text>
        <dbReference type="Rhea" id="RHEA:37743"/>
        <dbReference type="ChEBI" id="CHEBI:43474"/>
        <dbReference type="ChEBI" id="CHEBI:57618"/>
        <dbReference type="ChEBI" id="CHEBI:87467"/>
        <dbReference type="ChEBI" id="CHEBI:88052"/>
        <dbReference type="EC" id="2.5.1.129"/>
    </reaction>
</comment>
<comment type="subunit">
    <text evidence="1 2">Homododecamer.</text>
</comment>
<comment type="miscellaneous">
    <text evidence="5">It is not known, if phenolic acid decarboxylase forms a complex composed of EdcB, EdcC and EdcD. The term subunit is often used in reference to the operon, however there is no experimental evidence to prove the existence of the complex.</text>
</comment>
<comment type="similarity">
    <text evidence="1">Belongs to the UbiX/PAD1 family. YclB subfamily.</text>
</comment>
<evidence type="ECO:0000255" key="1">
    <source>
        <dbReference type="HAMAP-Rule" id="MF_01986"/>
    </source>
</evidence>
<evidence type="ECO:0000269" key="2">
    <source>
    </source>
</evidence>
<evidence type="ECO:0000269" key="3">
    <source>
    </source>
</evidence>
<evidence type="ECO:0000303" key="4">
    <source>
    </source>
</evidence>
<evidence type="ECO:0000305" key="5"/>
<evidence type="ECO:0007744" key="6">
    <source>
        <dbReference type="PDB" id="1SBZ"/>
    </source>
</evidence>
<evidence type="ECO:0007829" key="7">
    <source>
        <dbReference type="PDB" id="1SBZ"/>
    </source>
</evidence>
<protein>
    <recommendedName>
        <fullName evidence="1">Probable UbiX-like flavin prenyltransferase</fullName>
        <ecNumber evidence="1">2.5.1.129</ecNumber>
    </recommendedName>
    <alternativeName>
        <fullName evidence="1">Phenolic acid decarboxylase subunit B</fullName>
        <shortName evidence="1">PAD</shortName>
    </alternativeName>
</protein>
<dbReference type="EC" id="2.5.1.129" evidence="1"/>
<dbReference type="EMBL" id="AJ006210">
    <property type="protein sequence ID" value="CAB43500.1"/>
    <property type="molecule type" value="Genomic_DNA"/>
</dbReference>
<dbReference type="EMBL" id="AE005174">
    <property type="protein sequence ID" value="AAG57846.1"/>
    <property type="molecule type" value="Genomic_DNA"/>
</dbReference>
<dbReference type="EMBL" id="BA000007">
    <property type="protein sequence ID" value="BAB37016.1"/>
    <property type="molecule type" value="Genomic_DNA"/>
</dbReference>
<dbReference type="PIR" id="A91078">
    <property type="entry name" value="A91078"/>
</dbReference>
<dbReference type="PIR" id="T44998">
    <property type="entry name" value="T44998"/>
</dbReference>
<dbReference type="RefSeq" id="WP_000767724.1">
    <property type="nucleotide sequence ID" value="NZ_VOAI01000003.1"/>
</dbReference>
<dbReference type="PDB" id="1SBZ">
    <property type="method" value="X-ray"/>
    <property type="resolution" value="2.00 A"/>
    <property type="chains" value="A/B/C/D=1-197"/>
</dbReference>
<dbReference type="PDBsum" id="1SBZ"/>
<dbReference type="SMR" id="P69772"/>
<dbReference type="STRING" id="155864.Z4047"/>
<dbReference type="DrugBank" id="DB03247">
    <property type="generic name" value="Flavin mononucleotide"/>
</dbReference>
<dbReference type="KEGG" id="ece:Z4047"/>
<dbReference type="KEGG" id="ecs:ECs_3593"/>
<dbReference type="PATRIC" id="fig|386585.9.peg.3756"/>
<dbReference type="eggNOG" id="COG0163">
    <property type="taxonomic scope" value="Bacteria"/>
</dbReference>
<dbReference type="HOGENOM" id="CLU_074522_0_1_6"/>
<dbReference type="OMA" id="FVHERYL"/>
<dbReference type="BRENDA" id="4.1.1.98">
    <property type="organism ID" value="2026"/>
</dbReference>
<dbReference type="EvolutionaryTrace" id="P69772"/>
<dbReference type="Proteomes" id="UP000000558">
    <property type="component" value="Chromosome"/>
</dbReference>
<dbReference type="Proteomes" id="UP000002519">
    <property type="component" value="Chromosome"/>
</dbReference>
<dbReference type="GO" id="GO:0016831">
    <property type="term" value="F:carboxy-lyase activity"/>
    <property type="evidence" value="ECO:0007669"/>
    <property type="project" value="TreeGrafter"/>
</dbReference>
<dbReference type="GO" id="GO:0106141">
    <property type="term" value="F:flavin prenyltransferase activity"/>
    <property type="evidence" value="ECO:0007669"/>
    <property type="project" value="UniProtKB-EC"/>
</dbReference>
<dbReference type="GO" id="GO:0009056">
    <property type="term" value="P:catabolic process"/>
    <property type="evidence" value="ECO:0007669"/>
    <property type="project" value="UniProtKB-KW"/>
</dbReference>
<dbReference type="GO" id="GO:0009636">
    <property type="term" value="P:response to toxic substance"/>
    <property type="evidence" value="ECO:0007669"/>
    <property type="project" value="UniProtKB-KW"/>
</dbReference>
<dbReference type="FunFam" id="3.40.50.1950:FF:000001">
    <property type="entry name" value="Flavin prenyltransferase UbiX"/>
    <property type="match status" value="1"/>
</dbReference>
<dbReference type="Gene3D" id="3.40.50.1950">
    <property type="entry name" value="Flavin prenyltransferase-like"/>
    <property type="match status" value="1"/>
</dbReference>
<dbReference type="HAMAP" id="MF_01984">
    <property type="entry name" value="ubiX_pad"/>
    <property type="match status" value="1"/>
</dbReference>
<dbReference type="HAMAP" id="MF_01986">
    <property type="entry name" value="ubiX_pad_yclB"/>
    <property type="match status" value="1"/>
</dbReference>
<dbReference type="InterPro" id="IPR036551">
    <property type="entry name" value="Flavin_trans-like"/>
</dbReference>
<dbReference type="InterPro" id="IPR003382">
    <property type="entry name" value="Flavoprotein"/>
</dbReference>
<dbReference type="InterPro" id="IPR004507">
    <property type="entry name" value="UbiX-like"/>
</dbReference>
<dbReference type="InterPro" id="IPR032901">
    <property type="entry name" value="UbiX_pad_YclB"/>
</dbReference>
<dbReference type="NCBIfam" id="NF004685">
    <property type="entry name" value="PRK06029.1"/>
    <property type="match status" value="1"/>
</dbReference>
<dbReference type="NCBIfam" id="TIGR00421">
    <property type="entry name" value="ubiX_pad"/>
    <property type="match status" value="1"/>
</dbReference>
<dbReference type="NCBIfam" id="NF041206">
    <property type="entry name" value="VdcB"/>
    <property type="match status" value="1"/>
</dbReference>
<dbReference type="PANTHER" id="PTHR43374">
    <property type="entry name" value="FLAVIN PRENYLTRANSFERASE"/>
    <property type="match status" value="1"/>
</dbReference>
<dbReference type="PANTHER" id="PTHR43374:SF1">
    <property type="entry name" value="FLAVIN PRENYLTRANSFERASE PAD1, MITOCHONDRIAL"/>
    <property type="match status" value="1"/>
</dbReference>
<dbReference type="Pfam" id="PF02441">
    <property type="entry name" value="Flavoprotein"/>
    <property type="match status" value="1"/>
</dbReference>
<dbReference type="SUPFAM" id="SSF52507">
    <property type="entry name" value="Homo-oligomeric flavin-containing Cys decarboxylases, HFCD"/>
    <property type="match status" value="1"/>
</dbReference>
<accession>P69772</accession>
<accession>Q9X728</accession>
<feature type="chain" id="PRO_0000134963" description="Probable UbiX-like flavin prenyltransferase">
    <location>
        <begin position="1"/>
        <end position="197"/>
    </location>
</feature>
<feature type="binding site" evidence="1 2 6">
    <location>
        <begin position="9"/>
        <end position="11"/>
    </location>
    <ligand>
        <name>FMN</name>
        <dbReference type="ChEBI" id="CHEBI:58210"/>
    </ligand>
</feature>
<feature type="binding site" evidence="1 2 6">
    <location>
        <position position="36"/>
    </location>
    <ligand>
        <name>FMN</name>
        <dbReference type="ChEBI" id="CHEBI:58210"/>
    </ligand>
</feature>
<feature type="binding site" evidence="1 2 6">
    <location>
        <begin position="87"/>
        <end position="90"/>
    </location>
    <ligand>
        <name>FMN</name>
        <dbReference type="ChEBI" id="CHEBI:58210"/>
    </ligand>
</feature>
<feature type="binding site" evidence="1 2 6">
    <location>
        <position position="122"/>
    </location>
    <ligand>
        <name>FMN</name>
        <dbReference type="ChEBI" id="CHEBI:58210"/>
    </ligand>
</feature>
<feature type="strand" evidence="7">
    <location>
        <begin position="2"/>
        <end position="7"/>
    </location>
</feature>
<feature type="strand" evidence="7">
    <location>
        <begin position="9"/>
        <end position="11"/>
    </location>
</feature>
<feature type="helix" evidence="7">
    <location>
        <begin position="13"/>
        <end position="24"/>
    </location>
</feature>
<feature type="strand" evidence="7">
    <location>
        <begin position="30"/>
        <end position="35"/>
    </location>
</feature>
<feature type="helix" evidence="7">
    <location>
        <begin position="37"/>
        <end position="46"/>
    </location>
</feature>
<feature type="helix" evidence="7">
    <location>
        <begin position="51"/>
        <end position="56"/>
    </location>
</feature>
<feature type="strand" evidence="7">
    <location>
        <begin position="58"/>
        <end position="62"/>
    </location>
</feature>
<feature type="helix" evidence="7">
    <location>
        <begin position="70"/>
        <end position="72"/>
    </location>
</feature>
<feature type="strand" evidence="7">
    <location>
        <begin position="79"/>
        <end position="86"/>
    </location>
</feature>
<feature type="helix" evidence="7">
    <location>
        <begin position="88"/>
        <end position="96"/>
    </location>
</feature>
<feature type="helix" evidence="7">
    <location>
        <begin position="102"/>
        <end position="113"/>
    </location>
</feature>
<feature type="strand" evidence="7">
    <location>
        <begin position="116"/>
        <end position="121"/>
    </location>
</feature>
<feature type="strand" evidence="7">
    <location>
        <begin position="124"/>
        <end position="126"/>
    </location>
</feature>
<feature type="helix" evidence="7">
    <location>
        <begin position="128"/>
        <end position="138"/>
    </location>
</feature>
<feature type="turn" evidence="7">
    <location>
        <begin position="139"/>
        <end position="141"/>
    </location>
</feature>
<feature type="helix" evidence="7">
    <location>
        <begin position="158"/>
        <end position="170"/>
    </location>
</feature>
<feature type="helix" evidence="7">
    <location>
        <begin position="171"/>
        <end position="173"/>
    </location>
</feature>
<name>PADL_ECO57</name>